<comment type="function">
    <text evidence="1">Catalyzes the attachment of glutamate to tRNA(Glu) in a two-step reaction: glutamate is first activated by ATP to form Glu-AMP and then transferred to the acceptor end of tRNA(Glu).</text>
</comment>
<comment type="catalytic activity">
    <reaction evidence="1">
        <text>tRNA(Glu) + L-glutamate + ATP = L-glutamyl-tRNA(Glu) + AMP + diphosphate</text>
        <dbReference type="Rhea" id="RHEA:23540"/>
        <dbReference type="Rhea" id="RHEA-COMP:9663"/>
        <dbReference type="Rhea" id="RHEA-COMP:9680"/>
        <dbReference type="ChEBI" id="CHEBI:29985"/>
        <dbReference type="ChEBI" id="CHEBI:30616"/>
        <dbReference type="ChEBI" id="CHEBI:33019"/>
        <dbReference type="ChEBI" id="CHEBI:78442"/>
        <dbReference type="ChEBI" id="CHEBI:78520"/>
        <dbReference type="ChEBI" id="CHEBI:456215"/>
        <dbReference type="EC" id="6.1.1.17"/>
    </reaction>
</comment>
<comment type="subunit">
    <text evidence="1">Monomer.</text>
</comment>
<comment type="subcellular location">
    <subcellularLocation>
        <location evidence="1">Cytoplasm</location>
    </subcellularLocation>
</comment>
<comment type="similarity">
    <text evidence="1">Belongs to the class-I aminoacyl-tRNA synthetase family. Glutamate--tRNA ligase type 1 subfamily.</text>
</comment>
<dbReference type="EC" id="6.1.1.17" evidence="1"/>
<dbReference type="EMBL" id="CP000544">
    <property type="protein sequence ID" value="ABM60902.1"/>
    <property type="molecule type" value="Genomic_DNA"/>
</dbReference>
<dbReference type="RefSeq" id="WP_011812925.1">
    <property type="nucleotide sequence ID" value="NC_008789.1"/>
</dbReference>
<dbReference type="SMR" id="A1WT90"/>
<dbReference type="STRING" id="349124.Hhal_0108"/>
<dbReference type="KEGG" id="hha:Hhal_0108"/>
<dbReference type="eggNOG" id="COG0008">
    <property type="taxonomic scope" value="Bacteria"/>
</dbReference>
<dbReference type="HOGENOM" id="CLU_015768_6_3_6"/>
<dbReference type="OrthoDB" id="9807503at2"/>
<dbReference type="Proteomes" id="UP000000647">
    <property type="component" value="Chromosome"/>
</dbReference>
<dbReference type="GO" id="GO:0005829">
    <property type="term" value="C:cytosol"/>
    <property type="evidence" value="ECO:0007669"/>
    <property type="project" value="TreeGrafter"/>
</dbReference>
<dbReference type="GO" id="GO:0005524">
    <property type="term" value="F:ATP binding"/>
    <property type="evidence" value="ECO:0007669"/>
    <property type="project" value="UniProtKB-UniRule"/>
</dbReference>
<dbReference type="GO" id="GO:0004818">
    <property type="term" value="F:glutamate-tRNA ligase activity"/>
    <property type="evidence" value="ECO:0007669"/>
    <property type="project" value="UniProtKB-UniRule"/>
</dbReference>
<dbReference type="GO" id="GO:0000049">
    <property type="term" value="F:tRNA binding"/>
    <property type="evidence" value="ECO:0007669"/>
    <property type="project" value="InterPro"/>
</dbReference>
<dbReference type="GO" id="GO:0008270">
    <property type="term" value="F:zinc ion binding"/>
    <property type="evidence" value="ECO:0007669"/>
    <property type="project" value="InterPro"/>
</dbReference>
<dbReference type="GO" id="GO:0006424">
    <property type="term" value="P:glutamyl-tRNA aminoacylation"/>
    <property type="evidence" value="ECO:0007669"/>
    <property type="project" value="UniProtKB-UniRule"/>
</dbReference>
<dbReference type="CDD" id="cd00808">
    <property type="entry name" value="GluRS_core"/>
    <property type="match status" value="1"/>
</dbReference>
<dbReference type="Gene3D" id="1.10.10.350">
    <property type="match status" value="1"/>
</dbReference>
<dbReference type="Gene3D" id="3.40.50.620">
    <property type="entry name" value="HUPs"/>
    <property type="match status" value="1"/>
</dbReference>
<dbReference type="HAMAP" id="MF_00022">
    <property type="entry name" value="Glu_tRNA_synth_type1"/>
    <property type="match status" value="1"/>
</dbReference>
<dbReference type="InterPro" id="IPR045462">
    <property type="entry name" value="aa-tRNA-synth_I_cd-bd"/>
</dbReference>
<dbReference type="InterPro" id="IPR020751">
    <property type="entry name" value="aa-tRNA-synth_I_codon-bd_sub2"/>
</dbReference>
<dbReference type="InterPro" id="IPR001412">
    <property type="entry name" value="aa-tRNA-synth_I_CS"/>
</dbReference>
<dbReference type="InterPro" id="IPR008925">
    <property type="entry name" value="aa_tRNA-synth_I_cd-bd_sf"/>
</dbReference>
<dbReference type="InterPro" id="IPR004527">
    <property type="entry name" value="Glu-tRNA-ligase_bac/mito"/>
</dbReference>
<dbReference type="InterPro" id="IPR000924">
    <property type="entry name" value="Glu/Gln-tRNA-synth"/>
</dbReference>
<dbReference type="InterPro" id="IPR020058">
    <property type="entry name" value="Glu/Gln-tRNA-synth_Ib_cat-dom"/>
</dbReference>
<dbReference type="InterPro" id="IPR049940">
    <property type="entry name" value="GluQ/Sye"/>
</dbReference>
<dbReference type="InterPro" id="IPR033910">
    <property type="entry name" value="GluRS_core"/>
</dbReference>
<dbReference type="InterPro" id="IPR014729">
    <property type="entry name" value="Rossmann-like_a/b/a_fold"/>
</dbReference>
<dbReference type="NCBIfam" id="TIGR00464">
    <property type="entry name" value="gltX_bact"/>
    <property type="match status" value="1"/>
</dbReference>
<dbReference type="PANTHER" id="PTHR43311">
    <property type="entry name" value="GLUTAMATE--TRNA LIGASE"/>
    <property type="match status" value="1"/>
</dbReference>
<dbReference type="PANTHER" id="PTHR43311:SF2">
    <property type="entry name" value="GLUTAMATE--TRNA LIGASE, MITOCHONDRIAL-RELATED"/>
    <property type="match status" value="1"/>
</dbReference>
<dbReference type="Pfam" id="PF19269">
    <property type="entry name" value="Anticodon_2"/>
    <property type="match status" value="1"/>
</dbReference>
<dbReference type="Pfam" id="PF00749">
    <property type="entry name" value="tRNA-synt_1c"/>
    <property type="match status" value="1"/>
</dbReference>
<dbReference type="PRINTS" id="PR00987">
    <property type="entry name" value="TRNASYNTHGLU"/>
</dbReference>
<dbReference type="SUPFAM" id="SSF48163">
    <property type="entry name" value="An anticodon-binding domain of class I aminoacyl-tRNA synthetases"/>
    <property type="match status" value="1"/>
</dbReference>
<dbReference type="SUPFAM" id="SSF52374">
    <property type="entry name" value="Nucleotidylyl transferase"/>
    <property type="match status" value="1"/>
</dbReference>
<dbReference type="PROSITE" id="PS00178">
    <property type="entry name" value="AA_TRNA_LIGASE_I"/>
    <property type="match status" value="1"/>
</dbReference>
<accession>A1WT90</accession>
<proteinExistence type="inferred from homology"/>
<protein>
    <recommendedName>
        <fullName evidence="1">Glutamate--tRNA ligase 1</fullName>
        <ecNumber evidence="1">6.1.1.17</ecNumber>
    </recommendedName>
    <alternativeName>
        <fullName evidence="1">Glutamyl-tRNA synthetase 1</fullName>
        <shortName evidence="1">GluRS 1</shortName>
    </alternativeName>
</protein>
<name>SYE1_HALHL</name>
<organism>
    <name type="scientific">Halorhodospira halophila (strain DSM 244 / SL1)</name>
    <name type="common">Ectothiorhodospira halophila (strain DSM 244 / SL1)</name>
    <dbReference type="NCBI Taxonomy" id="349124"/>
    <lineage>
        <taxon>Bacteria</taxon>
        <taxon>Pseudomonadati</taxon>
        <taxon>Pseudomonadota</taxon>
        <taxon>Gammaproteobacteria</taxon>
        <taxon>Chromatiales</taxon>
        <taxon>Ectothiorhodospiraceae</taxon>
        <taxon>Halorhodospira</taxon>
    </lineage>
</organism>
<feature type="chain" id="PRO_0000367678" description="Glutamate--tRNA ligase 1">
    <location>
        <begin position="1"/>
        <end position="477"/>
    </location>
</feature>
<feature type="short sequence motif" description="'HIGH' region" evidence="1">
    <location>
        <begin position="12"/>
        <end position="22"/>
    </location>
</feature>
<feature type="short sequence motif" description="'KMSKS' region" evidence="1">
    <location>
        <begin position="253"/>
        <end position="257"/>
    </location>
</feature>
<feature type="binding site" evidence="1">
    <location>
        <position position="256"/>
    </location>
    <ligand>
        <name>ATP</name>
        <dbReference type="ChEBI" id="CHEBI:30616"/>
    </ligand>
</feature>
<evidence type="ECO:0000255" key="1">
    <source>
        <dbReference type="HAMAP-Rule" id="MF_00022"/>
    </source>
</evidence>
<gene>
    <name evidence="1" type="primary">gltX1</name>
    <name type="ordered locus">Hhal_0108</name>
</gene>
<sequence length="477" mass="52551">MNEMTVKTRFAPSPTGALHLGNLRTALFNALLAYGHGGRFVLRIEDTDRERYSPEATRSLMGDLRWLGLDWQEGPEVGGPAPPYHQFERGFLYDAYYRQLEAEGWAYPCFCSERELEMARRAQRSAGQPPRYPGTCARLTAEEVARKRAEGMQPALRFRVPSGDEVRFEDRIHGEQRFRTDDIGDFIIRRADGTAAYLFTNAVDDALMGITDVLRGDDHLTNTPRQLLILQALGLAAPRYGHMGLITGNDGAPLSKRNGSRSVGELARDGYLPEAMLNYLARVGHTCESEALLDLAGLAEGFDPARISTAPSRFDPDHLRHWQEEAVHGSSVRRLRPWMGIDALVPPGYAEDLVNAVRGNVRFPAEARDWAKRVFAGPPELDADAEAAIVSAGAEFFEAAAGAAEEGYTRFKGLTEAVKERTGVKGKQLFMPLRAALTGRCSGPELQPVVDLMGGERVVERLRRAATLAAEQGAQGE</sequence>
<reference key="1">
    <citation type="submission" date="2006-12" db="EMBL/GenBank/DDBJ databases">
        <title>Complete sequence of Halorhodospira halophila SL1.</title>
        <authorList>
            <consortium name="US DOE Joint Genome Institute"/>
            <person name="Copeland A."/>
            <person name="Lucas S."/>
            <person name="Lapidus A."/>
            <person name="Barry K."/>
            <person name="Detter J.C."/>
            <person name="Glavina del Rio T."/>
            <person name="Hammon N."/>
            <person name="Israni S."/>
            <person name="Dalin E."/>
            <person name="Tice H."/>
            <person name="Pitluck S."/>
            <person name="Saunders E."/>
            <person name="Brettin T."/>
            <person name="Bruce D."/>
            <person name="Han C."/>
            <person name="Tapia R."/>
            <person name="Schmutz J."/>
            <person name="Larimer F."/>
            <person name="Land M."/>
            <person name="Hauser L."/>
            <person name="Kyrpides N."/>
            <person name="Mikhailova N."/>
            <person name="Hoff W."/>
            <person name="Richardson P."/>
        </authorList>
    </citation>
    <scope>NUCLEOTIDE SEQUENCE [LARGE SCALE GENOMIC DNA]</scope>
    <source>
        <strain>DSM 244 / SL1</strain>
    </source>
</reference>
<keyword id="KW-0030">Aminoacyl-tRNA synthetase</keyword>
<keyword id="KW-0067">ATP-binding</keyword>
<keyword id="KW-0963">Cytoplasm</keyword>
<keyword id="KW-0436">Ligase</keyword>
<keyword id="KW-0547">Nucleotide-binding</keyword>
<keyword id="KW-0648">Protein biosynthesis</keyword>
<keyword id="KW-1185">Reference proteome</keyword>